<sequence>MSWIKNVTESPTSLIKKVSCGLIIAASLYAIAPSLSALVFGDSKQSIGKYTTVGLINRGNDCFITSSLQGLAGIPRFVEYLKRIRTVLLELETKLSNNAKGDNPTVDNTTRHSRLENSSNSLAPLHESLTSLILDLISVKDRKTSISPKIVINTLESIFKSKISSKQNDAHEFTLILLQTLQEERSKLIDYSKQICNLNIPKFPFEGETSKFLVCLKCKGLSEPSYKQTFIRELSVPQQTSENLSNILAHDETEIIDDYSCLICQIRAILNHEEYRNFKDCTPDEILMLDRLKNYATKAPINENLPFEVEQYVKRYSKGNLQVSNIKGKVIKKDVVVQLPDILIVHLSRSTFNGITYSRNPCNVKFGERITLSEYTLAESGTITENRQVKYNLKSVVKHTGSHSSGHYMCYRRKTEIRFGKEDESSFRRAPVVNNEVNKNREQNVAHNDYKKSRYKKVKNALRYPYWQISDTAIKESTASTVLNEQKYAYMLYYERVNK</sequence>
<protein>
    <recommendedName>
        <fullName>Ubiquitin carboxyl-terminal hydrolase 16</fullName>
        <ecNumber>3.4.19.12</ecNumber>
    </recommendedName>
    <alternativeName>
        <fullName>Deubiquitinating enzyme 16</fullName>
    </alternativeName>
    <alternativeName>
        <fullName>Ubiquitin thioesterase 16</fullName>
    </alternativeName>
    <alternativeName>
        <fullName>Ubiquitin-specific-processing protease 16</fullName>
    </alternativeName>
</protein>
<dbReference type="EC" id="3.4.19.12"/>
<dbReference type="EMBL" id="U41849">
    <property type="protein sequence ID" value="AAB68265.1"/>
    <property type="molecule type" value="Genomic_DNA"/>
</dbReference>
<dbReference type="EMBL" id="BK006949">
    <property type="protein sequence ID" value="DAA11359.1"/>
    <property type="molecule type" value="Genomic_DNA"/>
</dbReference>
<dbReference type="PIR" id="S61114">
    <property type="entry name" value="S61114"/>
</dbReference>
<dbReference type="RefSeq" id="NP_015253.1">
    <property type="nucleotide sequence ID" value="NM_001183886.1"/>
</dbReference>
<dbReference type="BioGRID" id="36107">
    <property type="interactions" value="67"/>
</dbReference>
<dbReference type="FunCoup" id="Q02863">
    <property type="interactions" value="59"/>
</dbReference>
<dbReference type="STRING" id="4932.YPL072W"/>
<dbReference type="MEROPS" id="C19.A18"/>
<dbReference type="PaxDb" id="4932-YPL072W"/>
<dbReference type="PeptideAtlas" id="Q02863"/>
<dbReference type="EnsemblFungi" id="YPL072W_mRNA">
    <property type="protein sequence ID" value="YPL072W"/>
    <property type="gene ID" value="YPL072W"/>
</dbReference>
<dbReference type="GeneID" id="856032"/>
<dbReference type="KEGG" id="sce:YPL072W"/>
<dbReference type="AGR" id="SGD:S000005993"/>
<dbReference type="SGD" id="S000005993">
    <property type="gene designation" value="UBP16"/>
</dbReference>
<dbReference type="VEuPathDB" id="FungiDB:YPL072W"/>
<dbReference type="eggNOG" id="ENOG502QSIQ">
    <property type="taxonomic scope" value="Eukaryota"/>
</dbReference>
<dbReference type="HOGENOM" id="CLU_023181_0_0_1"/>
<dbReference type="InParanoid" id="Q02863"/>
<dbReference type="OMA" id="ICQIRAI"/>
<dbReference type="OrthoDB" id="2248014at2759"/>
<dbReference type="BioCyc" id="YEAST:G3O-33980-MONOMER"/>
<dbReference type="BioGRID-ORCS" id="856032">
    <property type="hits" value="7 hits in 10 CRISPR screens"/>
</dbReference>
<dbReference type="PRO" id="PR:Q02863"/>
<dbReference type="Proteomes" id="UP000002311">
    <property type="component" value="Chromosome XVI"/>
</dbReference>
<dbReference type="RNAct" id="Q02863">
    <property type="molecule type" value="protein"/>
</dbReference>
<dbReference type="GO" id="GO:0005741">
    <property type="term" value="C:mitochondrial outer membrane"/>
    <property type="evidence" value="ECO:0000314"/>
    <property type="project" value="SGD"/>
</dbReference>
<dbReference type="GO" id="GO:0005739">
    <property type="term" value="C:mitochondrion"/>
    <property type="evidence" value="ECO:0007005"/>
    <property type="project" value="SGD"/>
</dbReference>
<dbReference type="GO" id="GO:0004843">
    <property type="term" value="F:cysteine-type deubiquitinase activity"/>
    <property type="evidence" value="ECO:0000304"/>
    <property type="project" value="SGD"/>
</dbReference>
<dbReference type="GO" id="GO:0016579">
    <property type="term" value="P:protein deubiquitination"/>
    <property type="evidence" value="ECO:0000304"/>
    <property type="project" value="SGD"/>
</dbReference>
<dbReference type="GO" id="GO:0006508">
    <property type="term" value="P:proteolysis"/>
    <property type="evidence" value="ECO:0007669"/>
    <property type="project" value="UniProtKB-KW"/>
</dbReference>
<dbReference type="CDD" id="cd02662">
    <property type="entry name" value="Peptidase_C19F"/>
    <property type="match status" value="1"/>
</dbReference>
<dbReference type="Gene3D" id="3.90.70.10">
    <property type="entry name" value="Cysteine proteinases"/>
    <property type="match status" value="1"/>
</dbReference>
<dbReference type="InterPro" id="IPR038765">
    <property type="entry name" value="Papain-like_cys_pep_sf"/>
</dbReference>
<dbReference type="InterPro" id="IPR050164">
    <property type="entry name" value="Peptidase_C19"/>
</dbReference>
<dbReference type="InterPro" id="IPR001394">
    <property type="entry name" value="Peptidase_C19_UCH"/>
</dbReference>
<dbReference type="InterPro" id="IPR018200">
    <property type="entry name" value="USP_CS"/>
</dbReference>
<dbReference type="InterPro" id="IPR028889">
    <property type="entry name" value="USP_dom"/>
</dbReference>
<dbReference type="PANTHER" id="PTHR24006">
    <property type="entry name" value="UBIQUITIN CARBOXYL-TERMINAL HYDROLASE"/>
    <property type="match status" value="1"/>
</dbReference>
<dbReference type="Pfam" id="PF00443">
    <property type="entry name" value="UCH"/>
    <property type="match status" value="1"/>
</dbReference>
<dbReference type="SUPFAM" id="SSF54001">
    <property type="entry name" value="Cysteine proteinases"/>
    <property type="match status" value="1"/>
</dbReference>
<dbReference type="PROSITE" id="PS00972">
    <property type="entry name" value="USP_1"/>
    <property type="match status" value="1"/>
</dbReference>
<dbReference type="PROSITE" id="PS00973">
    <property type="entry name" value="USP_2"/>
    <property type="match status" value="1"/>
</dbReference>
<dbReference type="PROSITE" id="PS50235">
    <property type="entry name" value="USP_3"/>
    <property type="match status" value="1"/>
</dbReference>
<feature type="chain" id="PRO_0000080601" description="Ubiquitin carboxyl-terminal hydrolase 16">
    <location>
        <begin position="1"/>
        <end position="499"/>
    </location>
</feature>
<feature type="domain" description="USP">
    <location>
        <begin position="53"/>
        <end position="497"/>
    </location>
</feature>
<feature type="active site" description="Nucleophile" evidence="1 2">
    <location>
        <position position="62"/>
    </location>
</feature>
<feature type="active site" description="Proton acceptor" evidence="1 2">
    <location>
        <position position="407"/>
    </location>
</feature>
<organism>
    <name type="scientific">Saccharomyces cerevisiae (strain ATCC 204508 / S288c)</name>
    <name type="common">Baker's yeast</name>
    <dbReference type="NCBI Taxonomy" id="559292"/>
    <lineage>
        <taxon>Eukaryota</taxon>
        <taxon>Fungi</taxon>
        <taxon>Dikarya</taxon>
        <taxon>Ascomycota</taxon>
        <taxon>Saccharomycotina</taxon>
        <taxon>Saccharomycetes</taxon>
        <taxon>Saccharomycetales</taxon>
        <taxon>Saccharomycetaceae</taxon>
        <taxon>Saccharomyces</taxon>
    </lineage>
</organism>
<comment type="catalytic activity">
    <reaction>
        <text>Thiol-dependent hydrolysis of ester, thioester, amide, peptide and isopeptide bonds formed by the C-terminal Gly of ubiquitin (a 76-residue protein attached to proteins as an intracellular targeting signal).</text>
        <dbReference type="EC" id="3.4.19.12"/>
    </reaction>
</comment>
<comment type="miscellaneous">
    <text evidence="3">Present with 450 molecules/cell in log phase SD medium.</text>
</comment>
<comment type="similarity">
    <text evidence="4">Belongs to the peptidase C19 family.</text>
</comment>
<keyword id="KW-0378">Hydrolase</keyword>
<keyword id="KW-0645">Protease</keyword>
<keyword id="KW-1185">Reference proteome</keyword>
<keyword id="KW-0788">Thiol protease</keyword>
<keyword id="KW-0833">Ubl conjugation pathway</keyword>
<gene>
    <name type="primary">UBP16</name>
    <name type="ordered locus">YPL072W</name>
    <name type="ORF">LPF12W</name>
</gene>
<accession>Q02863</accession>
<accession>D6W3U3</accession>
<proteinExistence type="evidence at protein level"/>
<evidence type="ECO:0000255" key="1">
    <source>
        <dbReference type="PROSITE-ProRule" id="PRU10092"/>
    </source>
</evidence>
<evidence type="ECO:0000255" key="2">
    <source>
        <dbReference type="PROSITE-ProRule" id="PRU10093"/>
    </source>
</evidence>
<evidence type="ECO:0000269" key="3">
    <source>
    </source>
</evidence>
<evidence type="ECO:0000305" key="4"/>
<name>UBP16_YEAST</name>
<reference key="1">
    <citation type="journal article" date="1997" name="Nature">
        <title>The nucleotide sequence of Saccharomyces cerevisiae chromosome XVI.</title>
        <authorList>
            <person name="Bussey H."/>
            <person name="Storms R.K."/>
            <person name="Ahmed A."/>
            <person name="Albermann K."/>
            <person name="Allen E."/>
            <person name="Ansorge W."/>
            <person name="Araujo R."/>
            <person name="Aparicio A."/>
            <person name="Barrell B.G."/>
            <person name="Badcock K."/>
            <person name="Benes V."/>
            <person name="Botstein D."/>
            <person name="Bowman S."/>
            <person name="Brueckner M."/>
            <person name="Carpenter J."/>
            <person name="Cherry J.M."/>
            <person name="Chung E."/>
            <person name="Churcher C.M."/>
            <person name="Coster F."/>
            <person name="Davis K."/>
            <person name="Davis R.W."/>
            <person name="Dietrich F.S."/>
            <person name="Delius H."/>
            <person name="DiPaolo T."/>
            <person name="Dubois E."/>
            <person name="Duesterhoeft A."/>
            <person name="Duncan M."/>
            <person name="Floeth M."/>
            <person name="Fortin N."/>
            <person name="Friesen J.D."/>
            <person name="Fritz C."/>
            <person name="Goffeau A."/>
            <person name="Hall J."/>
            <person name="Hebling U."/>
            <person name="Heumann K."/>
            <person name="Hilbert H."/>
            <person name="Hillier L.W."/>
            <person name="Hunicke-Smith S."/>
            <person name="Hyman R.W."/>
            <person name="Johnston M."/>
            <person name="Kalman S."/>
            <person name="Kleine K."/>
            <person name="Komp C."/>
            <person name="Kurdi O."/>
            <person name="Lashkari D."/>
            <person name="Lew H."/>
            <person name="Lin A."/>
            <person name="Lin D."/>
            <person name="Louis E.J."/>
            <person name="Marathe R."/>
            <person name="Messenguy F."/>
            <person name="Mewes H.-W."/>
            <person name="Mirtipati S."/>
            <person name="Moestl D."/>
            <person name="Mueller-Auer S."/>
            <person name="Namath A."/>
            <person name="Nentwich U."/>
            <person name="Oefner P."/>
            <person name="Pearson D."/>
            <person name="Petel F.X."/>
            <person name="Pohl T.M."/>
            <person name="Purnelle B."/>
            <person name="Rajandream M.A."/>
            <person name="Rechmann S."/>
            <person name="Rieger M."/>
            <person name="Riles L."/>
            <person name="Roberts D."/>
            <person name="Schaefer M."/>
            <person name="Scharfe M."/>
            <person name="Scherens B."/>
            <person name="Schramm S."/>
            <person name="Schroeder M."/>
            <person name="Sdicu A.-M."/>
            <person name="Tettelin H."/>
            <person name="Urrestarazu L.A."/>
            <person name="Ushinsky S."/>
            <person name="Vierendeels F."/>
            <person name="Vissers S."/>
            <person name="Voss H."/>
            <person name="Walsh S.V."/>
            <person name="Wambutt R."/>
            <person name="Wang Y."/>
            <person name="Wedler E."/>
            <person name="Wedler H."/>
            <person name="Winnett E."/>
            <person name="Zhong W.-W."/>
            <person name="Zollner A."/>
            <person name="Vo D.H."/>
            <person name="Hani J."/>
        </authorList>
    </citation>
    <scope>NUCLEOTIDE SEQUENCE [LARGE SCALE GENOMIC DNA]</scope>
    <source>
        <strain>ATCC 204508 / S288c</strain>
    </source>
</reference>
<reference key="2">
    <citation type="journal article" date="2014" name="G3 (Bethesda)">
        <title>The reference genome sequence of Saccharomyces cerevisiae: Then and now.</title>
        <authorList>
            <person name="Engel S.R."/>
            <person name="Dietrich F.S."/>
            <person name="Fisk D.G."/>
            <person name="Binkley G."/>
            <person name="Balakrishnan R."/>
            <person name="Costanzo M.C."/>
            <person name="Dwight S.S."/>
            <person name="Hitz B.C."/>
            <person name="Karra K."/>
            <person name="Nash R.S."/>
            <person name="Weng S."/>
            <person name="Wong E.D."/>
            <person name="Lloyd P."/>
            <person name="Skrzypek M.S."/>
            <person name="Miyasato S.R."/>
            <person name="Simison M."/>
            <person name="Cherry J.M."/>
        </authorList>
    </citation>
    <scope>GENOME REANNOTATION</scope>
    <source>
        <strain>ATCC 204508 / S288c</strain>
    </source>
</reference>
<reference key="3">
    <citation type="journal article" date="2003" name="Nature">
        <title>Global analysis of protein expression in yeast.</title>
        <authorList>
            <person name="Ghaemmaghami S."/>
            <person name="Huh W.-K."/>
            <person name="Bower K."/>
            <person name="Howson R.W."/>
            <person name="Belle A."/>
            <person name="Dephoure N."/>
            <person name="O'Shea E.K."/>
            <person name="Weissman J.S."/>
        </authorList>
    </citation>
    <scope>LEVEL OF PROTEIN EXPRESSION [LARGE SCALE ANALYSIS]</scope>
</reference>